<name>QCR7_SCHMA</name>
<dbReference type="EMBL" id="U90319">
    <property type="protein sequence ID" value="AAC47732.1"/>
    <property type="molecule type" value="Genomic_DNA"/>
</dbReference>
<dbReference type="RefSeq" id="XP_018655079.1">
    <property type="nucleotide sequence ID" value="XM_018789658.1"/>
</dbReference>
<dbReference type="SMR" id="O01374"/>
<dbReference type="FunCoup" id="O01374">
    <property type="interactions" value="541"/>
</dbReference>
<dbReference type="STRING" id="6183.O01374"/>
<dbReference type="EnsemblMetazoa" id="Smp_024120.1">
    <property type="protein sequence ID" value="Smp_024120.1"/>
    <property type="gene ID" value="Smp_024120"/>
</dbReference>
<dbReference type="GeneID" id="8349004"/>
<dbReference type="KEGG" id="smm:Smp_024120"/>
<dbReference type="WBParaSite" id="Smp_024120.1">
    <property type="protein sequence ID" value="Smp_024120.1"/>
    <property type="gene ID" value="Smp_024120"/>
</dbReference>
<dbReference type="CTD" id="8349004"/>
<dbReference type="eggNOG" id="KOG3440">
    <property type="taxonomic scope" value="Eukaryota"/>
</dbReference>
<dbReference type="HOGENOM" id="CLU_115154_1_0_1"/>
<dbReference type="InParanoid" id="O01374"/>
<dbReference type="OMA" id="REEWAMK"/>
<dbReference type="OrthoDB" id="425749at2759"/>
<dbReference type="PhylomeDB" id="O01374"/>
<dbReference type="Proteomes" id="UP000008854">
    <property type="component" value="Unassembled WGS sequence"/>
</dbReference>
<dbReference type="ExpressionAtlas" id="O01374">
    <property type="expression patterns" value="baseline"/>
</dbReference>
<dbReference type="GO" id="GO:0005743">
    <property type="term" value="C:mitochondrial inner membrane"/>
    <property type="evidence" value="ECO:0007669"/>
    <property type="project" value="UniProtKB-SubCell"/>
</dbReference>
<dbReference type="GO" id="GO:0045275">
    <property type="term" value="C:respiratory chain complex III"/>
    <property type="evidence" value="ECO:0007669"/>
    <property type="project" value="InterPro"/>
</dbReference>
<dbReference type="GO" id="GO:0006122">
    <property type="term" value="P:mitochondrial electron transport, ubiquinol to cytochrome c"/>
    <property type="evidence" value="ECO:0007669"/>
    <property type="project" value="InterPro"/>
</dbReference>
<dbReference type="Gene3D" id="1.10.1090.10">
    <property type="entry name" value="Cytochrome b-c1 complex subunit 7"/>
    <property type="match status" value="1"/>
</dbReference>
<dbReference type="InterPro" id="IPR003197">
    <property type="entry name" value="QCR7"/>
</dbReference>
<dbReference type="InterPro" id="IPR036544">
    <property type="entry name" value="QCR7_sf"/>
</dbReference>
<dbReference type="PANTHER" id="PTHR12022:SF0">
    <property type="entry name" value="CYTOCHROME B-C1 COMPLEX SUBUNIT 7"/>
    <property type="match status" value="1"/>
</dbReference>
<dbReference type="PANTHER" id="PTHR12022">
    <property type="entry name" value="UBIQUINOL-CYTOCHROME C REDUCTASE COMPLEX 14 KD PROTEIN"/>
    <property type="match status" value="1"/>
</dbReference>
<dbReference type="Pfam" id="PF02271">
    <property type="entry name" value="UCR_14kD"/>
    <property type="match status" value="1"/>
</dbReference>
<dbReference type="SUPFAM" id="SSF81524">
    <property type="entry name" value="14 kDa protein of cytochrome bc1 complex (Ubiquinol-cytochrome c reductase)"/>
    <property type="match status" value="1"/>
</dbReference>
<proteinExistence type="inferred from homology"/>
<keyword id="KW-0249">Electron transport</keyword>
<keyword id="KW-0472">Membrane</keyword>
<keyword id="KW-0496">Mitochondrion</keyword>
<keyword id="KW-0999">Mitochondrion inner membrane</keyword>
<keyword id="KW-1185">Reference proteome</keyword>
<keyword id="KW-0679">Respiratory chain</keyword>
<keyword id="KW-0813">Transport</keyword>
<comment type="function">
    <text evidence="1">Component of the ubiquinol-cytochrome c oxidoreductase, a multisubunit transmembrane complex that is part of the mitochondrial electron transport chain which drives oxidative phosphorylation. The respiratory chain contains 3 multisubunit complexes succinate dehydrogenase (complex II, CII), ubiquinol-cytochrome c oxidoreductase (cytochrome b-c1 complex, complex III, CIII) and cytochrome c oxidase (complex IV, CIV), that cooperate to transfer electrons derived from NADH and succinate to molecular oxygen, creating an electrochemical gradient over the inner membrane that drives transmembrane transport and the ATP synthase. The cytochrome b-c1 complex catalyzes electron transfer from ubiquinol to cytochrome c, linking this redox reaction to translocation of protons across the mitochondrial inner membrane, with protons being carried across the membrane as hydrogens on the quinol. In the process called Q cycle, 2 protons are consumed from the matrix, 4 protons are released into the intermembrane space and 2 electrons are passed to cytochrome c.</text>
</comment>
<comment type="subunit">
    <text evidence="1">Component of the ubiquinol-cytochrome c oxidoreductase (cytochrome b-c1 complex, complex III, CIII), a multisubunit enzyme composed of 3 respiratory subunits cytochrome b, cytochrome c1 and Rieske protein, 2 core protein subunits, and additional low-molecular weight protein subunits. The complex exists as an obligatory dimer and forms supercomplexes (SCs) in the inner mitochondrial membrane with cytochrome c oxidase (complex IV, CIV).</text>
</comment>
<comment type="subcellular location">
    <subcellularLocation>
        <location evidence="1">Mitochondrion inner membrane</location>
        <topology evidence="1">Peripheral membrane protein</topology>
        <orientation evidence="1">Matrix side</orientation>
    </subcellularLocation>
</comment>
<comment type="similarity">
    <text evidence="2">Belongs to the UQCRB/QCR7 family.</text>
</comment>
<comment type="caution">
    <text evidence="2">Was originally thought to be the ubiquinone-binding protein (QP-C).</text>
</comment>
<feature type="chain" id="PRO_0000193529" description="Cytochrome b-c1 complex subunit 7">
    <location>
        <begin position="1"/>
        <end position="130"/>
    </location>
</feature>
<protein>
    <recommendedName>
        <fullName>Cytochrome b-c1 complex subunit 7</fullName>
    </recommendedName>
    <alternativeName>
        <fullName>Complex III subunit 7</fullName>
    </alternativeName>
    <alternativeName>
        <fullName>Complex III subunit VII</fullName>
    </alternativeName>
    <alternativeName>
        <fullName>Ubiquinol-cytochrome c reductase complex 14 kDa protein</fullName>
    </alternativeName>
</protein>
<sequence length="130" mass="15443">MAYLRTGAEFIASYRSSLNRMSDLQQKIKMFGFNNAYYNQVGLLKHDWLPHSPVWLEALRRLPRELQEARDFRIARASLLYASKHVLPKEQWTTIEDDIPYLEPYVNVVVKEMSDRSNWDNFVNPEIYSE</sequence>
<organism>
    <name type="scientific">Schistosoma mansoni</name>
    <name type="common">Blood fluke</name>
    <dbReference type="NCBI Taxonomy" id="6183"/>
    <lineage>
        <taxon>Eukaryota</taxon>
        <taxon>Metazoa</taxon>
        <taxon>Spiralia</taxon>
        <taxon>Lophotrochozoa</taxon>
        <taxon>Platyhelminthes</taxon>
        <taxon>Trematoda</taxon>
        <taxon>Digenea</taxon>
        <taxon>Strigeidida</taxon>
        <taxon>Schistosomatoidea</taxon>
        <taxon>Schistosomatidae</taxon>
        <taxon>Schistosoma</taxon>
    </lineage>
</organism>
<evidence type="ECO:0000250" key="1">
    <source>
        <dbReference type="UniProtKB" id="P00128"/>
    </source>
</evidence>
<evidence type="ECO:0000305" key="2"/>
<accession>O01374</accession>
<reference key="1">
    <citation type="journal article" date="1997" name="Mol. Biochem. Parasitol.">
        <title>Gene linkage and steady state RNAs suggest trans-splicing may be associated with a polycistronic transcript in Schistosoma mansoni.</title>
        <authorList>
            <person name="Davis R.E."/>
            <person name="Hodgson S."/>
        </authorList>
    </citation>
    <scope>NUCLEOTIDE SEQUENCE [GENOMIC DNA]</scope>
    <source>
        <strain>Puerto Rican</strain>
    </source>
</reference>